<accession>Q22799</accession>
<protein>
    <recommendedName>
        <fullName>Dynein light chain 1, cytoplasmic</fullName>
    </recommendedName>
</protein>
<dbReference type="EMBL" id="FO080366">
    <property type="protein sequence ID" value="CCD63216.1"/>
    <property type="molecule type" value="Genomic_DNA"/>
</dbReference>
<dbReference type="PIR" id="T34388">
    <property type="entry name" value="T34388"/>
</dbReference>
<dbReference type="RefSeq" id="NP_001379626.1">
    <property type="nucleotide sequence ID" value="NM_001392125.1"/>
</dbReference>
<dbReference type="RefSeq" id="NP_498422.1">
    <property type="nucleotide sequence ID" value="NM_066021.4"/>
</dbReference>
<dbReference type="PDB" id="7Y8W">
    <property type="method" value="X-ray"/>
    <property type="resolution" value="2.40 A"/>
    <property type="chains" value="A/B/C/D/G/H/I/J/M/N/Q/R=1-89"/>
</dbReference>
<dbReference type="PDBsum" id="7Y8W"/>
<dbReference type="SMR" id="Q22799"/>
<dbReference type="BioGRID" id="41140">
    <property type="interactions" value="68"/>
</dbReference>
<dbReference type="ComplexPortal" id="CPX-1388">
    <property type="entry name" value="bicd-1-dlc-1-egal-1 microtubule-associated dynein motor complex"/>
</dbReference>
<dbReference type="DIP" id="DIP-25449N"/>
<dbReference type="FunCoup" id="Q22799">
    <property type="interactions" value="1986"/>
</dbReference>
<dbReference type="IntAct" id="Q22799">
    <property type="interactions" value="28"/>
</dbReference>
<dbReference type="STRING" id="6239.T26A5.9.3"/>
<dbReference type="PaxDb" id="6239-T26A5.9.2"/>
<dbReference type="PeptideAtlas" id="Q22799"/>
<dbReference type="EnsemblMetazoa" id="T26A5.9.1">
    <property type="protein sequence ID" value="T26A5.9.1"/>
    <property type="gene ID" value="WBGene00001005"/>
</dbReference>
<dbReference type="GeneID" id="175922"/>
<dbReference type="UCSC" id="T26A5.9.1">
    <property type="organism name" value="c. elegans"/>
</dbReference>
<dbReference type="AGR" id="WB:WBGene00001005"/>
<dbReference type="WormBase" id="T26A5.9">
    <property type="protein sequence ID" value="CE00788"/>
    <property type="gene ID" value="WBGene00001005"/>
    <property type="gene designation" value="dlc-1"/>
</dbReference>
<dbReference type="eggNOG" id="KOG3430">
    <property type="taxonomic scope" value="Eukaryota"/>
</dbReference>
<dbReference type="GeneTree" id="ENSGT00390000000378"/>
<dbReference type="HOGENOM" id="CLU_070944_4_0_1"/>
<dbReference type="InParanoid" id="Q22799"/>
<dbReference type="OMA" id="THEKGHF"/>
<dbReference type="OrthoDB" id="10033309at2759"/>
<dbReference type="PhylomeDB" id="Q22799"/>
<dbReference type="Reactome" id="R-CEL-1632852">
    <property type="pathway name" value="Macroautophagy"/>
</dbReference>
<dbReference type="Reactome" id="R-CEL-5620924">
    <property type="pathway name" value="Intraflagellar transport"/>
</dbReference>
<dbReference type="Reactome" id="R-CEL-6798695">
    <property type="pathway name" value="Neutrophil degranulation"/>
</dbReference>
<dbReference type="Reactome" id="R-CEL-6807878">
    <property type="pathway name" value="COPI-mediated anterograde transport"/>
</dbReference>
<dbReference type="Reactome" id="R-CEL-6811436">
    <property type="pathway name" value="COPI-independent Golgi-to-ER retrograde traffic"/>
</dbReference>
<dbReference type="Reactome" id="R-CEL-9646399">
    <property type="pathway name" value="Aggrephagy"/>
</dbReference>
<dbReference type="SignaLink" id="Q22799"/>
<dbReference type="PRO" id="PR:Q22799"/>
<dbReference type="Proteomes" id="UP000001940">
    <property type="component" value="Chromosome III"/>
</dbReference>
<dbReference type="Bgee" id="WBGene00001005">
    <property type="expression patterns" value="Expressed in embryo and 4 other cell types or tissues"/>
</dbReference>
<dbReference type="GO" id="GO:0005737">
    <property type="term" value="C:cytoplasm"/>
    <property type="evidence" value="ECO:0007669"/>
    <property type="project" value="UniProtKB-KW"/>
</dbReference>
<dbReference type="GO" id="GO:0005868">
    <property type="term" value="C:cytoplasmic dynein complex"/>
    <property type="evidence" value="ECO:0000318"/>
    <property type="project" value="GO_Central"/>
</dbReference>
<dbReference type="GO" id="GO:0005874">
    <property type="term" value="C:microtubule"/>
    <property type="evidence" value="ECO:0007669"/>
    <property type="project" value="UniProtKB-KW"/>
</dbReference>
<dbReference type="GO" id="GO:0005875">
    <property type="term" value="C:microtubule associated complex"/>
    <property type="evidence" value="ECO:0000303"/>
    <property type="project" value="ComplexPortal"/>
</dbReference>
<dbReference type="GO" id="GO:0005635">
    <property type="term" value="C:nuclear envelope"/>
    <property type="evidence" value="ECO:0007669"/>
    <property type="project" value="UniProtKB-SubCell"/>
</dbReference>
<dbReference type="GO" id="GO:0045505">
    <property type="term" value="F:dynein intermediate chain binding"/>
    <property type="evidence" value="ECO:0000318"/>
    <property type="project" value="GO_Central"/>
</dbReference>
<dbReference type="GO" id="GO:0006915">
    <property type="term" value="P:apoptotic process"/>
    <property type="evidence" value="ECO:0007669"/>
    <property type="project" value="UniProtKB-KW"/>
</dbReference>
<dbReference type="GO" id="GO:0051301">
    <property type="term" value="P:cell division"/>
    <property type="evidence" value="ECO:0007669"/>
    <property type="project" value="UniProtKB-KW"/>
</dbReference>
<dbReference type="GO" id="GO:0051321">
    <property type="term" value="P:meiotic cell cycle"/>
    <property type="evidence" value="ECO:0007669"/>
    <property type="project" value="UniProtKB-KW"/>
</dbReference>
<dbReference type="GO" id="GO:0030473">
    <property type="term" value="P:nuclear migration along microtubule"/>
    <property type="evidence" value="ECO:0000303"/>
    <property type="project" value="ComplexPortal"/>
</dbReference>
<dbReference type="CDD" id="cd21452">
    <property type="entry name" value="DLC-like_DYNLL1_DYNLL2"/>
    <property type="match status" value="1"/>
</dbReference>
<dbReference type="FunFam" id="3.30.740.10:FF:000001">
    <property type="entry name" value="Dynein light chain"/>
    <property type="match status" value="1"/>
</dbReference>
<dbReference type="Gene3D" id="3.30.740.10">
    <property type="entry name" value="Protein Inhibitor Of Neuronal Nitric Oxide Synthase"/>
    <property type="match status" value="1"/>
</dbReference>
<dbReference type="InterPro" id="IPR037177">
    <property type="entry name" value="DLC_sf"/>
</dbReference>
<dbReference type="InterPro" id="IPR019763">
    <property type="entry name" value="Dynein_light_1/2_CS"/>
</dbReference>
<dbReference type="InterPro" id="IPR001372">
    <property type="entry name" value="Dynein_light_chain_typ-1/2"/>
</dbReference>
<dbReference type="PANTHER" id="PTHR11886">
    <property type="entry name" value="DYNEIN LIGHT CHAIN"/>
    <property type="match status" value="1"/>
</dbReference>
<dbReference type="PANTHER" id="PTHR11886:SF35">
    <property type="entry name" value="DYNEIN LIGHT CHAIN"/>
    <property type="match status" value="1"/>
</dbReference>
<dbReference type="Pfam" id="PF01221">
    <property type="entry name" value="Dynein_light"/>
    <property type="match status" value="1"/>
</dbReference>
<dbReference type="SMART" id="SM01375">
    <property type="entry name" value="Dynein_light"/>
    <property type="match status" value="1"/>
</dbReference>
<dbReference type="SUPFAM" id="SSF54648">
    <property type="entry name" value="DLC"/>
    <property type="match status" value="1"/>
</dbReference>
<dbReference type="PROSITE" id="PS01239">
    <property type="entry name" value="DYNEIN_LIGHT_1"/>
    <property type="match status" value="1"/>
</dbReference>
<organism>
    <name type="scientific">Caenorhabditis elegans</name>
    <dbReference type="NCBI Taxonomy" id="6239"/>
    <lineage>
        <taxon>Eukaryota</taxon>
        <taxon>Metazoa</taxon>
        <taxon>Ecdysozoa</taxon>
        <taxon>Nematoda</taxon>
        <taxon>Chromadorea</taxon>
        <taxon>Rhabditida</taxon>
        <taxon>Rhabditina</taxon>
        <taxon>Rhabditomorpha</taxon>
        <taxon>Rhabditoidea</taxon>
        <taxon>Rhabditidae</taxon>
        <taxon>Peloderinae</taxon>
        <taxon>Caenorhabditis</taxon>
    </lineage>
</organism>
<comment type="function">
    <text evidence="2 3 4 5 6 7">Acts as a non-catalytic accessory component of a dynein complex (By similarity). Part of a complex with bicd-1 and egal-1, which is recruited to the nuclear envelope by unc-83, where in turn, it recruits dynein to the nuclear surface and regulates nuclear migrations in hypodermal precursor cells (PubMed:20005871). Probably within a dynein motor complex, plays a role in the cell fate specification of the germline and oogenesis (PubMed:19752194, PubMed:27864381). In particular, it inhibits germ cell proliferation (PubMed:19752194). Regulates the function and localization of the RNA-binding protein fbf-2 in the germline (PubMed:27864381). Plays a role in mitotic and meiotic processes (PubMed:19752194, PubMed:26483555). Involved in the pairing of homologous chromosomes (PubMed:26483555). Independently of its dynein-mediated functions, plays a role in germ cell apoptosis (PubMed:24030151).</text>
</comment>
<comment type="subunit">
    <text evidence="3 4 7">Interacts with mett-10; the interaction is direct, and is required for the nuclear localization of mett-10 (PubMed:19752194). Component of a dynein-regulating complex composed of at least bicd-1, dlc-1 and egal-1 (PubMed:20005871). Interacts with egal-1 and unc-83 (PubMed:20005871). Interacts with fbf-2 (PubMed:27864381).</text>
</comment>
<comment type="interaction">
    <interactant intactId="EBI-328324">
        <id>Q22799</id>
    </interactant>
    <interactant intactId="EBI-328330">
        <id>Q17902</id>
        <label>egal-1</label>
    </interactant>
    <organismsDiffer>false</organismsDiffer>
    <experiments>5</experiments>
</comment>
<comment type="interaction">
    <interactant intactId="EBI-328324">
        <id>Q22799</id>
    </interactant>
    <interactant intactId="EBI-323135">
        <id>C6KRN1</id>
        <label>sao-1</label>
    </interactant>
    <organismsDiffer>false</organismsDiffer>
    <experiments>4</experiments>
</comment>
<comment type="interaction">
    <interactant intactId="EBI-328324">
        <id>Q22799</id>
    </interactant>
    <interactant intactId="EBI-328382">
        <id>G5ECT7</id>
        <label>spat-1</label>
    </interactant>
    <organismsDiffer>false</organismsDiffer>
    <experiments>3</experiments>
</comment>
<comment type="subcellular location">
    <subcellularLocation>
        <location evidence="1">Cytoplasm</location>
        <location evidence="1">Cytoskeleton</location>
    </subcellularLocation>
    <subcellularLocation>
        <location evidence="7 9">Nucleus envelope</location>
    </subcellularLocation>
    <subcellularLocation>
        <location evidence="7">Cytoplasmic granule</location>
    </subcellularLocation>
    <text evidence="7 9">Probably recruited to the nuclear envelope by unc-83 (PubMed:20005871). Localizes to perinuclear patches in the transition zone (PubMed:27864381). Localizes to P-granules in the mitotic region and transition zone (PubMed:27864381).</text>
</comment>
<comment type="tissue specificity">
    <text evidence="5">Broadly expressed in tissues including the intestine, body wall muscles, germs cells, oocytes, the rectal valve and cells in the head.</text>
</comment>
<comment type="developmental stage">
    <text evidence="5">Expressed at all developmental stages from the one-cell embryo.</text>
</comment>
<comment type="disruption phenotype">
    <text evidence="3 4 5 6 7">RNAi-mediated knockdown results in viable animals, with progeny that have nuclear migration defects in the hyp7 hypodermal precursor cells at the L1 stage of larval development (PubMed:20005871). RNAi-mediated knockdown results in increased germ cell apoptosis, but does not affect somatic cell death (PubMed:24030151). RNAi-mediated knockdown results in reduced mett-10 accumulation in nuclei (PubMed:19752194). RNAi-mediated knockdown prevents fbf-2 localization to P-granules (PubMed:27864381). Furthermore, RNAi-mediated knockdown in a fbf-2 loss of function background results in sterility and masculinization of the germline where only sperm, and not oocytes, are produced (PubMed:27864381). RNAi-mediated knockdown in a dhc-1 loss of function (or195) mutant background results in failed homologous chromosome pairing during meiosis (PubMed:26483555). RNAi-mediated knockdown in a glp-1 gain of function sensitized mutant background results in disrupted meiotic and mitotic processes (PubMed:19752194). This in turn results in polyploid nuclei, that are larger in size and contain more DNA as compared to wild-type (PubMed:19752194). In addition, many oocytes from these animals also contain unpaired chromosomes (PubMed:19752194).</text>
</comment>
<comment type="similarity">
    <text evidence="8">Belongs to the dynein light chain family.</text>
</comment>
<sequence>MVDRKAVIKNADMSDDMQQDAIDCATQALEKYNIEKDIAAYIKKEFDKKYNPTWHCIVGRNFGSYVTHETKHFIYFYLGQVAILLFKSG</sequence>
<reference key="1">
    <citation type="journal article" date="1998" name="Science">
        <title>Genome sequence of the nematode C. elegans: a platform for investigating biology.</title>
        <authorList>
            <consortium name="The C. elegans sequencing consortium"/>
        </authorList>
    </citation>
    <scope>NUCLEOTIDE SEQUENCE [LARGE SCALE GENOMIC DNA]</scope>
    <source>
        <strain>Bristol N2</strain>
    </source>
</reference>
<reference key="2">
    <citation type="journal article" date="2009" name="Mol. Cell. Biol.">
        <title>A role for dynein in the inhibition of germ cell proliferative fate.</title>
        <authorList>
            <person name="Dorsett M."/>
            <person name="Schedl T."/>
        </authorList>
    </citation>
    <scope>FUNCTION</scope>
    <scope>INTERACTION WITH METT-10</scope>
    <scope>DISRUPTION PHENOTYPE</scope>
    <scope>MUTAGENESIS OF PHE-62; THR-67; HIS-68 AND PHE-73</scope>
</reference>
<reference key="3">
    <citation type="journal article" date="2010" name="Dev. Biol.">
        <title>UNC-83 coordinates kinesin-1 and dynein activities at the nuclear envelope during nuclear migration.</title>
        <authorList>
            <person name="Fridolfsson H.N."/>
            <person name="Ly N."/>
            <person name="Meyerzon M."/>
            <person name="Starr D.A."/>
        </authorList>
    </citation>
    <scope>FUNCTION</scope>
    <scope>IDENTIFICATION IN A COMPLEX WITH BICD-1 AND EGAL-1</scope>
    <scope>INTERACTION WITH EGAL-1 AND UNC-83</scope>
    <scope>SUBCELLULAR LOCATION</scope>
    <scope>DISRUPTION PHENOTYPE</scope>
</reference>
<reference key="4">
    <citation type="journal article" date="2013" name="Cell Death Dis.">
        <title>Cell-nonautonomous inhibition of radiation-induced apoptosis by dynein light chain 1 in Caenorhabditis elegans.</title>
        <authorList>
            <person name="Morthorst T.H."/>
            <person name="Olsen A."/>
        </authorList>
    </citation>
    <scope>FUNCTION</scope>
    <scope>TISSUE SPECIFICITY</scope>
    <scope>DEVELOPMENTAL STAGE</scope>
    <scope>DISRUPTION PHENOTYPE</scope>
</reference>
<reference key="5">
    <citation type="journal article" date="2015" name="J. Cell Biol.">
        <title>Spindle assembly checkpoint proteins regulate and monitor meiotic synapsis in C. elegans.</title>
        <authorList>
            <person name="Bohr T."/>
            <person name="Nelson C.R."/>
            <person name="Klee E."/>
            <person name="Bhalla N."/>
        </authorList>
    </citation>
    <scope>FUNCTION</scope>
    <scope>DISRUPTION PHENOTYPE</scope>
</reference>
<reference key="6">
    <citation type="journal article" date="2016" name="Development">
        <title>Dynein light chain DLC-1 promotes localization and function of the PUF protein FBF-2 in germline progenitor cells.</title>
        <authorList>
            <person name="Wang X."/>
            <person name="Olson J.R."/>
            <person name="Rasoloson D."/>
            <person name="Ellenbecker M."/>
            <person name="Bailey J."/>
            <person name="Voronina E."/>
        </authorList>
    </citation>
    <scope>IDENTIFICATION BY MASS SPECTROMETRY</scope>
    <scope>FUNCTION</scope>
    <scope>INTERACTION WITH FGF-2</scope>
    <scope>SUBCELLULAR LOCATION</scope>
    <scope>DISRUPTION PHENOTYPE</scope>
</reference>
<evidence type="ECO:0000250" key="1">
    <source>
        <dbReference type="UniProtKB" id="P63170"/>
    </source>
</evidence>
<evidence type="ECO:0000250" key="2">
    <source>
        <dbReference type="UniProtKB" id="Q24117"/>
    </source>
</evidence>
<evidence type="ECO:0000269" key="3">
    <source>
    </source>
</evidence>
<evidence type="ECO:0000269" key="4">
    <source>
    </source>
</evidence>
<evidence type="ECO:0000269" key="5">
    <source>
    </source>
</evidence>
<evidence type="ECO:0000269" key="6">
    <source>
    </source>
</evidence>
<evidence type="ECO:0000269" key="7">
    <source>
    </source>
</evidence>
<evidence type="ECO:0000305" key="8"/>
<evidence type="ECO:0000305" key="9">
    <source>
    </source>
</evidence>
<evidence type="ECO:0000312" key="10">
    <source>
        <dbReference type="WormBase" id="T26A5.9"/>
    </source>
</evidence>
<evidence type="ECO:0007829" key="11">
    <source>
        <dbReference type="PDB" id="7Y8W"/>
    </source>
</evidence>
<proteinExistence type="evidence at protein level"/>
<keyword id="KW-0002">3D-structure</keyword>
<keyword id="KW-0053">Apoptosis</keyword>
<keyword id="KW-0131">Cell cycle</keyword>
<keyword id="KW-0132">Cell division</keyword>
<keyword id="KW-0963">Cytoplasm</keyword>
<keyword id="KW-0206">Cytoskeleton</keyword>
<keyword id="KW-0243">Dynein</keyword>
<keyword id="KW-0469">Meiosis</keyword>
<keyword id="KW-0493">Microtubule</keyword>
<keyword id="KW-0498">Mitosis</keyword>
<keyword id="KW-0505">Motor protein</keyword>
<keyword id="KW-0539">Nucleus</keyword>
<keyword id="KW-1185">Reference proteome</keyword>
<keyword id="KW-0813">Transport</keyword>
<gene>
    <name evidence="10" type="primary">dlc-1</name>
    <name evidence="10" type="ORF">T26A5.9</name>
</gene>
<name>DYL1_CAEEL</name>
<feature type="chain" id="PRO_0000195130" description="Dynein light chain 1, cytoplasmic">
    <location>
        <begin position="1"/>
        <end position="89"/>
    </location>
</feature>
<feature type="site" description="Required for mett-10 binding" evidence="3">
    <location>
        <position position="62"/>
    </location>
</feature>
<feature type="site" description="Required for mett-10 binding" evidence="3">
    <location>
        <position position="67"/>
    </location>
</feature>
<feature type="site" description="Required for mett-10 binding" evidence="3">
    <location>
        <position position="73"/>
    </location>
</feature>
<feature type="mutagenesis site" description="Reduces mett-10 binding." evidence="3">
    <original>F</original>
    <variation>S</variation>
    <location>
        <position position="62"/>
    </location>
</feature>
<feature type="mutagenesis site" description="Reduces mett-10 binding." evidence="3">
    <original>T</original>
    <variation>A</variation>
    <location>
        <position position="67"/>
    </location>
</feature>
<feature type="mutagenesis site" description="Does not affect mett-10 binding." evidence="3">
    <original>H</original>
    <variation>A</variation>
    <location>
        <position position="68"/>
    </location>
</feature>
<feature type="mutagenesis site" description="Reduces mett-10 binding." evidence="3">
    <original>F</original>
    <variation>S</variation>
    <location>
        <position position="73"/>
    </location>
</feature>
<feature type="strand" evidence="11">
    <location>
        <begin position="6"/>
        <end position="13"/>
    </location>
</feature>
<feature type="helix" evidence="11">
    <location>
        <begin position="15"/>
        <end position="31"/>
    </location>
</feature>
<feature type="helix" evidence="11">
    <location>
        <begin position="35"/>
        <end position="50"/>
    </location>
</feature>
<feature type="strand" evidence="11">
    <location>
        <begin position="54"/>
        <end position="69"/>
    </location>
</feature>
<feature type="strand" evidence="11">
    <location>
        <begin position="72"/>
        <end position="78"/>
    </location>
</feature>
<feature type="strand" evidence="11">
    <location>
        <begin position="81"/>
        <end position="87"/>
    </location>
</feature>